<organism>
    <name type="scientific">Mus musculus</name>
    <name type="common">Mouse</name>
    <dbReference type="NCBI Taxonomy" id="10090"/>
    <lineage>
        <taxon>Eukaryota</taxon>
        <taxon>Metazoa</taxon>
        <taxon>Chordata</taxon>
        <taxon>Craniata</taxon>
        <taxon>Vertebrata</taxon>
        <taxon>Euteleostomi</taxon>
        <taxon>Mammalia</taxon>
        <taxon>Eutheria</taxon>
        <taxon>Euarchontoglires</taxon>
        <taxon>Glires</taxon>
        <taxon>Rodentia</taxon>
        <taxon>Myomorpha</taxon>
        <taxon>Muroidea</taxon>
        <taxon>Muridae</taxon>
        <taxon>Murinae</taxon>
        <taxon>Mus</taxon>
        <taxon>Mus</taxon>
    </lineage>
</organism>
<evidence type="ECO:0000250" key="1"/>
<evidence type="ECO:0000250" key="2">
    <source>
        <dbReference type="UniProtKB" id="P35612"/>
    </source>
</evidence>
<evidence type="ECO:0000250" key="3">
    <source>
        <dbReference type="UniProtKB" id="Q05764"/>
    </source>
</evidence>
<evidence type="ECO:0000255" key="4"/>
<evidence type="ECO:0000256" key="5">
    <source>
        <dbReference type="SAM" id="MobiDB-lite"/>
    </source>
</evidence>
<evidence type="ECO:0000303" key="6">
    <source>
    </source>
</evidence>
<evidence type="ECO:0000303" key="7">
    <source>
    </source>
</evidence>
<evidence type="ECO:0000303" key="8">
    <source>
    </source>
</evidence>
<evidence type="ECO:0000305" key="9"/>
<evidence type="ECO:0007744" key="10">
    <source>
    </source>
</evidence>
<evidence type="ECO:0007744" key="11">
    <source>
    </source>
</evidence>
<evidence type="ECO:0007744" key="12">
    <source>
    </source>
</evidence>
<evidence type="ECO:0007744" key="13">
    <source>
    </source>
</evidence>
<proteinExistence type="evidence at protein level"/>
<sequence>MSEDTVPEAASPPPSQGQHYFDRFSEDDPEYLRLRNRAADLRQDFNLMEQKKRVTMILQSPSFREELEGLIQEQMKKGNNSSNIWALRQIADFMASTSHAVFPASSMNFSMMTPINDLHTADSLNLAKGERLMRCKISSVYRLLDLYGWAQLSDTYVTLRVSKEQDHFLISPKGVSCSEVTASSLIKVNILGEVVEKGSSCFPVDTTGFSLHSAIYAARPDVRCAIHLHTPATAAVSAMKCGLLPVSHNALLVGDMAYYDFNGEMEQEADRINLQKCLGPTCKILVLRNHGMVALGDTVEEAFYKVFHLQAACEVQVSALSSAGGTENLILLEQEKHRPHEVGSVQWAGSTFGPMQKSRLGEHEFEALMRMLDNLGYRTGYTYRHPFVQEKTKHKSEVEIPATVTAFVFEEDGVPVPALRQHAQKQQKEKTRWLNTPNTYLRVNVADEVQRNMGSPRPKTTWMKADEVEKSSSGMPIRIENPNQFVPLYTDPQEVLDMRNKIREQNRQDIKSAGPQSQLLASVIAEKSRSPSTESQLMSKGDADTKDESEETVPNPFSQLTDQELEEYKKEVERKKLEQEQEGEKDIATEKPGSPVKSTPASPVQSPSKAGTKSPAVSPSKTSEDTKKTEVSEANTEPEPVKPEGLVVNGKEEEPSVEEALSKGLGQMTTNADTDGDSYKDKTESVTSGPLSPEGSPSKSPSKKKKKFRTPSFLKKSKKKEKVES</sequence>
<accession>Q9QYB8</accession>
<accession>Q3U0E1</accession>
<accession>Q80VH9</accession>
<accession>Q8C1C4</accession>
<accession>Q9CXE3</accession>
<accession>Q9JLE4</accession>
<accession>Q9JLE5</accession>
<accession>Q9QYB7</accession>
<gene>
    <name type="primary">Add2</name>
</gene>
<protein>
    <recommendedName>
        <fullName>Beta-adducin</fullName>
    </recommendedName>
    <alternativeName>
        <fullName>Add97</fullName>
    </alternativeName>
    <alternativeName>
        <fullName>Erythrocyte adducin subunit beta</fullName>
    </alternativeName>
</protein>
<keyword id="KW-0009">Actin-binding</keyword>
<keyword id="KW-0025">Alternative splicing</keyword>
<keyword id="KW-0112">Calmodulin-binding</keyword>
<keyword id="KW-1003">Cell membrane</keyword>
<keyword id="KW-0963">Cytoplasm</keyword>
<keyword id="KW-0206">Cytoskeleton</keyword>
<keyword id="KW-0472">Membrane</keyword>
<keyword id="KW-0597">Phosphoprotein</keyword>
<keyword id="KW-1185">Reference proteome</keyword>
<feature type="chain" id="PRO_0000218534" description="Beta-adducin">
    <location>
        <begin position="1"/>
        <end position="725"/>
    </location>
</feature>
<feature type="region of interest" description="Disordered" evidence="5">
    <location>
        <begin position="1"/>
        <end position="22"/>
    </location>
</feature>
<feature type="region of interest" description="Interaction with calmodulin" evidence="4">
    <location>
        <begin position="425"/>
        <end position="444"/>
    </location>
</feature>
<feature type="region of interest" description="Disordered" evidence="5">
    <location>
        <begin position="525"/>
        <end position="725"/>
    </location>
</feature>
<feature type="region of interest" description="Interaction with calmodulin" evidence="4">
    <location>
        <begin position="703"/>
        <end position="720"/>
    </location>
</feature>
<feature type="compositionally biased region" description="Basic and acidic residues" evidence="5">
    <location>
        <begin position="566"/>
        <end position="589"/>
    </location>
</feature>
<feature type="compositionally biased region" description="Polar residues" evidence="5">
    <location>
        <begin position="596"/>
        <end position="621"/>
    </location>
</feature>
<feature type="compositionally biased region" description="Basic and acidic residues" evidence="5">
    <location>
        <begin position="622"/>
        <end position="631"/>
    </location>
</feature>
<feature type="compositionally biased region" description="Low complexity" evidence="5">
    <location>
        <begin position="687"/>
        <end position="700"/>
    </location>
</feature>
<feature type="compositionally biased region" description="Basic residues" evidence="5">
    <location>
        <begin position="701"/>
        <end position="725"/>
    </location>
</feature>
<feature type="modified residue" description="Phosphoserine" evidence="2">
    <location>
        <position position="11"/>
    </location>
</feature>
<feature type="modified residue" description="Phosphoserine" evidence="3">
    <location>
        <position position="25"/>
    </location>
</feature>
<feature type="modified residue" description="Phosphothreonine" evidence="2">
    <location>
        <position position="55"/>
    </location>
</feature>
<feature type="modified residue" description="Phosphoserine" evidence="13">
    <location>
        <position position="60"/>
    </location>
</feature>
<feature type="modified residue" description="Phosphoserine" evidence="13">
    <location>
        <position position="344"/>
    </location>
</feature>
<feature type="modified residue" description="Phosphoserine" evidence="13">
    <location>
        <position position="530"/>
    </location>
</feature>
<feature type="modified residue" description="Phosphoserine" evidence="12 13">
    <location>
        <position position="532"/>
    </location>
</feature>
<feature type="modified residue" description="Phosphothreonine" evidence="13">
    <location>
        <position position="533"/>
    </location>
</feature>
<feature type="modified residue" description="Phosphoserine" evidence="12 13">
    <location>
        <position position="535"/>
    </location>
</feature>
<feature type="modified residue" description="Phosphoserine" evidence="13">
    <location>
        <position position="594"/>
    </location>
</feature>
<feature type="modified residue" description="Phosphoserine" evidence="13">
    <location>
        <position position="598"/>
    </location>
</feature>
<feature type="modified residue" description="Phosphoserine" evidence="11 13">
    <location>
        <position position="602"/>
    </location>
</feature>
<feature type="modified residue" description="Phosphoserine" evidence="13">
    <location>
        <position position="606"/>
    </location>
</feature>
<feature type="modified residue" description="Phosphothreonine" evidence="2">
    <location>
        <position position="612"/>
    </location>
</feature>
<feature type="modified residue" description="Phosphoserine" evidence="13">
    <location>
        <position position="614"/>
    </location>
</feature>
<feature type="modified residue" description="Phosphoserine" evidence="13">
    <location>
        <position position="618"/>
    </location>
</feature>
<feature type="modified residue" description="Phosphoserine" evidence="13">
    <location>
        <position position="620"/>
    </location>
</feature>
<feature type="modified residue" description="Phosphothreonine" evidence="2">
    <location>
        <position position="674"/>
    </location>
</feature>
<feature type="modified residue" description="Phosphoserine" evidence="3">
    <location>
        <position position="678"/>
    </location>
</feature>
<feature type="modified residue" description="Phosphoserine" evidence="3">
    <location>
        <position position="685"/>
    </location>
</feature>
<feature type="modified residue" description="Phosphoserine" evidence="13">
    <location>
        <position position="688"/>
    </location>
</feature>
<feature type="modified residue" description="Phosphoserine" evidence="13">
    <location>
        <position position="692"/>
    </location>
</feature>
<feature type="modified residue" description="Phosphoserine" evidence="13">
    <location>
        <position position="696"/>
    </location>
</feature>
<feature type="modified residue" description="Phosphoserine" evidence="13">
    <location>
        <position position="698"/>
    </location>
</feature>
<feature type="modified residue" description="Phosphoserine" evidence="13">
    <location>
        <position position="700"/>
    </location>
</feature>
<feature type="modified residue" description="Phosphoserine" evidence="2">
    <location>
        <position position="702"/>
    </location>
</feature>
<feature type="modified residue" description="Phosphoserine" evidence="2">
    <location>
        <position position="712"/>
    </location>
</feature>
<feature type="splice variant" id="VSP_022596" description="In isoform 3." evidence="6">
    <location>
        <begin position="284"/>
        <end position="531"/>
    </location>
</feature>
<feature type="splice variant" id="VSP_000184" description="In isoform 2." evidence="7 8">
    <original>STESQLMSKGDADTKDESEETVPNPFSQLTD</original>
    <variation>VQQRLPPTEGEVYQTPGAGQGTPESSGPLTP</variation>
    <location>
        <begin position="532"/>
        <end position="562"/>
    </location>
</feature>
<feature type="splice variant" id="VSP_000185" description="In isoform 2." evidence="7 8">
    <location>
        <begin position="563"/>
        <end position="725"/>
    </location>
</feature>
<feature type="sequence conflict" description="In Ref. 2; AAF29503." evidence="9" ref="2">
    <original>R</original>
    <variation>T</variation>
    <location>
        <position position="219"/>
    </location>
</feature>
<feature type="sequence conflict" description="In Ref. 1; AAF24972/AAF24973." evidence="9" ref="1">
    <original>E</original>
    <variation>Q</variation>
    <location>
        <position position="469"/>
    </location>
</feature>
<feature type="sequence conflict" description="In Ref. 3; BAC25943." evidence="9" ref="3">
    <original>Q</original>
    <variation>H</variation>
    <location>
        <position position="518"/>
    </location>
</feature>
<feature type="sequence conflict" description="In Ref. 1; AAF24972." evidence="9" ref="1">
    <original>A</original>
    <variation>R</variation>
    <location>
        <position position="634"/>
    </location>
</feature>
<feature type="sequence conflict" description="In Ref. 1; AAF24972." evidence="9" ref="1">
    <original>G</original>
    <variation>V</variation>
    <location>
        <position position="666"/>
    </location>
</feature>
<feature type="sequence conflict" description="In Ref. 2; AAF29502/AAF29503." evidence="9" ref="2">
    <original>D</original>
    <variation>V</variation>
    <location>
        <position position="675"/>
    </location>
</feature>
<feature type="modified residue" description="Phosphothreonine" evidence="10">
    <location sequence="Q9QYB8-2">
        <position position="561"/>
    </location>
</feature>
<name>ADDB_MOUSE</name>
<dbReference type="EMBL" id="AF100422">
    <property type="protein sequence ID" value="AAF24972.1"/>
    <property type="molecule type" value="mRNA"/>
</dbReference>
<dbReference type="EMBL" id="AF100423">
    <property type="protein sequence ID" value="AAF24973.1"/>
    <property type="molecule type" value="mRNA"/>
</dbReference>
<dbReference type="EMBL" id="AF189769">
    <property type="protein sequence ID" value="AAF29502.1"/>
    <property type="molecule type" value="mRNA"/>
</dbReference>
<dbReference type="EMBL" id="AF189770">
    <property type="protein sequence ID" value="AAF29503.1"/>
    <property type="molecule type" value="mRNA"/>
</dbReference>
<dbReference type="EMBL" id="AK014496">
    <property type="protein sequence ID" value="BAB29395.1"/>
    <property type="molecule type" value="mRNA"/>
</dbReference>
<dbReference type="EMBL" id="AK028425">
    <property type="protein sequence ID" value="BAC25943.1"/>
    <property type="molecule type" value="mRNA"/>
</dbReference>
<dbReference type="EMBL" id="AK156954">
    <property type="protein sequence ID" value="BAE33913.1"/>
    <property type="molecule type" value="mRNA"/>
</dbReference>
<dbReference type="EMBL" id="BC046783">
    <property type="protein sequence ID" value="AAH46783.1"/>
    <property type="molecule type" value="mRNA"/>
</dbReference>
<dbReference type="EMBL" id="BC053032">
    <property type="protein sequence ID" value="AAH53032.1"/>
    <property type="molecule type" value="mRNA"/>
</dbReference>
<dbReference type="CCDS" id="CCDS20308.1">
    <molecule id="Q9QYB8-1"/>
</dbReference>
<dbReference type="CCDS" id="CCDS85085.1">
    <molecule id="Q9QYB8-2"/>
</dbReference>
<dbReference type="PIR" id="A60670">
    <property type="entry name" value="A60670"/>
</dbReference>
<dbReference type="RefSeq" id="NP_001258786.1">
    <molecule id="Q9QYB8-1"/>
    <property type="nucleotide sequence ID" value="NM_001271857.1"/>
</dbReference>
<dbReference type="RefSeq" id="NP_001258787.1">
    <molecule id="Q9QYB8-1"/>
    <property type="nucleotide sequence ID" value="NM_001271858.1"/>
</dbReference>
<dbReference type="RefSeq" id="NP_001258788.1">
    <molecule id="Q9QYB8-1"/>
    <property type="nucleotide sequence ID" value="NM_001271859.1"/>
</dbReference>
<dbReference type="RefSeq" id="NP_001258789.1">
    <molecule id="Q9QYB8-2"/>
    <property type="nucleotide sequence ID" value="NM_001271860.1"/>
</dbReference>
<dbReference type="RefSeq" id="NP_001258790.1">
    <molecule id="Q9QYB8-2"/>
    <property type="nucleotide sequence ID" value="NM_001271861.1"/>
</dbReference>
<dbReference type="RefSeq" id="NP_038486.2">
    <molecule id="Q9QYB8-1"/>
    <property type="nucleotide sequence ID" value="NM_013458.5"/>
</dbReference>
<dbReference type="SMR" id="Q9QYB8"/>
<dbReference type="BioGRID" id="197982">
    <property type="interactions" value="15"/>
</dbReference>
<dbReference type="FunCoup" id="Q9QYB8">
    <property type="interactions" value="273"/>
</dbReference>
<dbReference type="IntAct" id="Q9QYB8">
    <property type="interactions" value="2"/>
</dbReference>
<dbReference type="MINT" id="Q9QYB8"/>
<dbReference type="STRING" id="10090.ENSMUSP00000145160"/>
<dbReference type="iPTMnet" id="Q9QYB8"/>
<dbReference type="MetOSite" id="Q9QYB8"/>
<dbReference type="PhosphoSitePlus" id="Q9QYB8"/>
<dbReference type="SwissPalm" id="Q9QYB8"/>
<dbReference type="REPRODUCTION-2DPAGE" id="Q9QYB8"/>
<dbReference type="jPOST" id="Q9QYB8"/>
<dbReference type="PaxDb" id="10090-ENSMUSP00000032069"/>
<dbReference type="PeptideAtlas" id="Q9QYB8"/>
<dbReference type="ProteomicsDB" id="296178">
    <molecule id="Q9QYB8-1"/>
</dbReference>
<dbReference type="ProteomicsDB" id="296179">
    <molecule id="Q9QYB8-2"/>
</dbReference>
<dbReference type="ProteomicsDB" id="296180">
    <molecule id="Q9QYB8-3"/>
</dbReference>
<dbReference type="Antibodypedia" id="4066">
    <property type="antibodies" value="235 antibodies from 29 providers"/>
</dbReference>
<dbReference type="DNASU" id="11519"/>
<dbReference type="Ensembl" id="ENSMUST00000032069.8">
    <molecule id="Q9QYB8-1"/>
    <property type="protein sequence ID" value="ENSMUSP00000032069.6"/>
    <property type="gene ID" value="ENSMUSG00000030000.11"/>
</dbReference>
<dbReference type="Ensembl" id="ENSMUST00000203196.3">
    <molecule id="Q9QYB8-2"/>
    <property type="protein sequence ID" value="ENSMUSP00000145104.2"/>
    <property type="gene ID" value="ENSMUSG00000030000.11"/>
</dbReference>
<dbReference type="Ensembl" id="ENSMUST00000203279.2">
    <molecule id="Q9QYB8-3"/>
    <property type="protein sequence ID" value="ENSMUSP00000145452.2"/>
    <property type="gene ID" value="ENSMUSG00000030000.11"/>
</dbReference>
<dbReference type="Ensembl" id="ENSMUST00000203366.3">
    <molecule id="Q9QYB8-2"/>
    <property type="protein sequence ID" value="ENSMUSP00000144849.2"/>
    <property type="gene ID" value="ENSMUSG00000030000.11"/>
</dbReference>
<dbReference type="Ensembl" id="ENSMUST00000203724.3">
    <molecule id="Q9QYB8-1"/>
    <property type="protein sequence ID" value="ENSMUSP00000145296.2"/>
    <property type="gene ID" value="ENSMUSG00000030000.11"/>
</dbReference>
<dbReference type="Ensembl" id="ENSMUST00000203786.3">
    <molecule id="Q9QYB8-1"/>
    <property type="protein sequence ID" value="ENSMUSP00000144694.2"/>
    <property type="gene ID" value="ENSMUSG00000030000.11"/>
</dbReference>
<dbReference type="Ensembl" id="ENSMUST00000204059.3">
    <molecule id="Q9QYB8-1"/>
    <property type="protein sequence ID" value="ENSMUSP00000145160.2"/>
    <property type="gene ID" value="ENSMUSG00000030000.11"/>
</dbReference>
<dbReference type="Ensembl" id="ENSMUST00000205034.3">
    <molecule id="Q9QYB8-2"/>
    <property type="protein sequence ID" value="ENSMUSP00000145034.2"/>
    <property type="gene ID" value="ENSMUSG00000030000.11"/>
</dbReference>
<dbReference type="GeneID" id="11519"/>
<dbReference type="KEGG" id="mmu:11519"/>
<dbReference type="UCSC" id="uc009crd.2">
    <molecule id="Q9QYB8-2"/>
    <property type="organism name" value="mouse"/>
</dbReference>
<dbReference type="UCSC" id="uc009cre.2">
    <molecule id="Q9QYB8-1"/>
    <property type="organism name" value="mouse"/>
</dbReference>
<dbReference type="UCSC" id="uc012eoj.2">
    <molecule id="Q9QYB8-3"/>
    <property type="organism name" value="mouse"/>
</dbReference>
<dbReference type="AGR" id="MGI:87919"/>
<dbReference type="CTD" id="119"/>
<dbReference type="MGI" id="MGI:87919">
    <property type="gene designation" value="Add2"/>
</dbReference>
<dbReference type="VEuPathDB" id="HostDB:ENSMUSG00000030000"/>
<dbReference type="eggNOG" id="KOG3699">
    <property type="taxonomic scope" value="Eukaryota"/>
</dbReference>
<dbReference type="GeneTree" id="ENSGT00940000159299"/>
<dbReference type="HOGENOM" id="CLU_006033_9_2_1"/>
<dbReference type="InParanoid" id="Q9QYB8"/>
<dbReference type="OMA" id="TSGFCLH"/>
<dbReference type="OrthoDB" id="3238794at2759"/>
<dbReference type="PhylomeDB" id="Q9QYB8"/>
<dbReference type="TreeFam" id="TF313003"/>
<dbReference type="Reactome" id="R-MMU-5223345">
    <property type="pathway name" value="Miscellaneous transport and binding events"/>
</dbReference>
<dbReference type="BioGRID-ORCS" id="11519">
    <property type="hits" value="3 hits in 76 CRISPR screens"/>
</dbReference>
<dbReference type="CD-CODE" id="CE726F99">
    <property type="entry name" value="Postsynaptic density"/>
</dbReference>
<dbReference type="ChiTaRS" id="Add2">
    <property type="organism name" value="mouse"/>
</dbReference>
<dbReference type="PRO" id="PR:Q9QYB8"/>
<dbReference type="Proteomes" id="UP000000589">
    <property type="component" value="Chromosome 6"/>
</dbReference>
<dbReference type="RNAct" id="Q9QYB8">
    <property type="molecule type" value="protein"/>
</dbReference>
<dbReference type="Bgee" id="ENSMUSG00000030000">
    <property type="expression patterns" value="Expressed in olfactory tubercle and 174 other cell types or tissues"/>
</dbReference>
<dbReference type="ExpressionAtlas" id="Q9QYB8">
    <property type="expression patterns" value="baseline and differential"/>
</dbReference>
<dbReference type="GO" id="GO:0031410">
    <property type="term" value="C:cytoplasmic vesicle"/>
    <property type="evidence" value="ECO:0000250"/>
    <property type="project" value="UniProtKB"/>
</dbReference>
<dbReference type="GO" id="GO:0008290">
    <property type="term" value="C:F-actin capping protein complex"/>
    <property type="evidence" value="ECO:0007669"/>
    <property type="project" value="Ensembl"/>
</dbReference>
<dbReference type="GO" id="GO:0016020">
    <property type="term" value="C:membrane"/>
    <property type="evidence" value="ECO:0000314"/>
    <property type="project" value="MGI"/>
</dbReference>
<dbReference type="GO" id="GO:0044853">
    <property type="term" value="C:plasma membrane raft"/>
    <property type="evidence" value="ECO:0007669"/>
    <property type="project" value="Ensembl"/>
</dbReference>
<dbReference type="GO" id="GO:0014069">
    <property type="term" value="C:postsynaptic density"/>
    <property type="evidence" value="ECO:0000314"/>
    <property type="project" value="MGI"/>
</dbReference>
<dbReference type="GO" id="GO:0051015">
    <property type="term" value="F:actin filament binding"/>
    <property type="evidence" value="ECO:0007669"/>
    <property type="project" value="Ensembl"/>
</dbReference>
<dbReference type="GO" id="GO:0005516">
    <property type="term" value="F:calmodulin binding"/>
    <property type="evidence" value="ECO:0007669"/>
    <property type="project" value="UniProtKB-KW"/>
</dbReference>
<dbReference type="GO" id="GO:0046982">
    <property type="term" value="F:protein heterodimerization activity"/>
    <property type="evidence" value="ECO:0007669"/>
    <property type="project" value="Ensembl"/>
</dbReference>
<dbReference type="GO" id="GO:0042803">
    <property type="term" value="F:protein homodimerization activity"/>
    <property type="evidence" value="ECO:0007669"/>
    <property type="project" value="Ensembl"/>
</dbReference>
<dbReference type="GO" id="GO:0019901">
    <property type="term" value="F:protein kinase binding"/>
    <property type="evidence" value="ECO:0007669"/>
    <property type="project" value="Ensembl"/>
</dbReference>
<dbReference type="GO" id="GO:0030507">
    <property type="term" value="F:spectrin binding"/>
    <property type="evidence" value="ECO:0007669"/>
    <property type="project" value="Ensembl"/>
</dbReference>
<dbReference type="GO" id="GO:0005200">
    <property type="term" value="F:structural constituent of cytoskeleton"/>
    <property type="evidence" value="ECO:0000314"/>
    <property type="project" value="MGI"/>
</dbReference>
<dbReference type="GO" id="GO:0051017">
    <property type="term" value="P:actin filament bundle assembly"/>
    <property type="evidence" value="ECO:0007669"/>
    <property type="project" value="Ensembl"/>
</dbReference>
<dbReference type="GO" id="GO:0051016">
    <property type="term" value="P:barbed-end actin filament capping"/>
    <property type="evidence" value="ECO:0007669"/>
    <property type="project" value="Ensembl"/>
</dbReference>
<dbReference type="GO" id="GO:0030097">
    <property type="term" value="P:hemopoiesis"/>
    <property type="evidence" value="ECO:0000315"/>
    <property type="project" value="MGI"/>
</dbReference>
<dbReference type="GO" id="GO:0050901">
    <property type="term" value="P:leukocyte tethering or rolling"/>
    <property type="evidence" value="ECO:0007669"/>
    <property type="project" value="Ensembl"/>
</dbReference>
<dbReference type="GO" id="GO:0065003">
    <property type="term" value="P:protein-containing complex assembly"/>
    <property type="evidence" value="ECO:0000250"/>
    <property type="project" value="UniProtKB"/>
</dbReference>
<dbReference type="GO" id="GO:0007416">
    <property type="term" value="P:synapse assembly"/>
    <property type="evidence" value="ECO:0000314"/>
    <property type="project" value="SynGO"/>
</dbReference>
<dbReference type="CDD" id="cd00398">
    <property type="entry name" value="Aldolase_II"/>
    <property type="match status" value="1"/>
</dbReference>
<dbReference type="FunFam" id="3.40.225.10:FF:000004">
    <property type="entry name" value="gamma-adducin isoform X1"/>
    <property type="match status" value="1"/>
</dbReference>
<dbReference type="Gene3D" id="3.40.225.10">
    <property type="entry name" value="Class II aldolase/adducin N-terminal domain"/>
    <property type="match status" value="1"/>
</dbReference>
<dbReference type="InterPro" id="IPR051017">
    <property type="entry name" value="Aldolase-II_Adducin_sf"/>
</dbReference>
<dbReference type="InterPro" id="IPR001303">
    <property type="entry name" value="Aldolase_II/adducin_N"/>
</dbReference>
<dbReference type="InterPro" id="IPR036409">
    <property type="entry name" value="Aldolase_II/adducin_N_sf"/>
</dbReference>
<dbReference type="PANTHER" id="PTHR10672">
    <property type="entry name" value="ADDUCIN"/>
    <property type="match status" value="1"/>
</dbReference>
<dbReference type="PANTHER" id="PTHR10672:SF6">
    <property type="entry name" value="BETA-ADDUCIN"/>
    <property type="match status" value="1"/>
</dbReference>
<dbReference type="Pfam" id="PF00596">
    <property type="entry name" value="Aldolase_II"/>
    <property type="match status" value="1"/>
</dbReference>
<dbReference type="SMART" id="SM01007">
    <property type="entry name" value="Aldolase_II"/>
    <property type="match status" value="1"/>
</dbReference>
<dbReference type="SUPFAM" id="SSF53639">
    <property type="entry name" value="AraD/HMP-PK domain-like"/>
    <property type="match status" value="1"/>
</dbReference>
<comment type="function">
    <text evidence="1">Membrane-cytoskeleton-associated protein that promotes the assembly of the spectrin-actin network. Binds to the erythrocyte membrane receptor SLC2A1/GLUT1 and may therefore provide a link between the spectrin cytoskeleton to the plasma membrane. Binds to calmodulin. Calmodulin binds preferentially to the beta subunit (By similarity).</text>
</comment>
<comment type="subunit">
    <text evidence="1">Found in a complex with ADD2, DMTN and SLC2A1. Interacts with SLC2A1 (By similarity). Heterodimer of an alpha and a beta subunit.</text>
</comment>
<comment type="subcellular location">
    <subcellularLocation>
        <location evidence="1">Cytoplasm</location>
        <location evidence="1">Cytoskeleton</location>
    </subcellularLocation>
    <subcellularLocation>
        <location evidence="1">Cell membrane</location>
        <topology evidence="1">Peripheral membrane protein</topology>
        <orientation evidence="1">Cytoplasmic side</orientation>
    </subcellularLocation>
</comment>
<comment type="alternative products">
    <event type="alternative splicing"/>
    <isoform>
        <id>Q9QYB8-1</id>
        <name>1</name>
        <sequence type="displayed"/>
    </isoform>
    <isoform>
        <id>Q9QYB8-2</id>
        <name>2</name>
        <sequence type="described" ref="VSP_000184 VSP_000185"/>
    </isoform>
    <isoform>
        <id>Q9QYB8-3</id>
        <name>3</name>
        <name>Delta</name>
        <sequence type="described" ref="VSP_022596"/>
    </isoform>
    <text>Additional isoforms seem to exist.</text>
</comment>
<comment type="domain">
    <text>Each subunit is comprised of three regions: a NH2-terminal protease-resistant globular head region, a short connecting subdomain, and a protease-sensitive tail region.</text>
</comment>
<comment type="similarity">
    <text evidence="9">Belongs to the aldolase class II family. Adducin subfamily.</text>
</comment>
<reference key="1">
    <citation type="journal article" date="2000" name="Mamm. Genome">
        <title>The mouse adducin gene family: alternative splicing and chromosomal localization.</title>
        <authorList>
            <person name="Suriyapperuma S.P."/>
            <person name="Lozovatsky L."/>
            <person name="Ciciotte S.L."/>
            <person name="Peters L.L."/>
            <person name="Gilligan D.M."/>
        </authorList>
    </citation>
    <scope>NUCLEOTIDE SEQUENCE [MRNA]</scope>
    <scope>ALTERNATIVE SPLICING</scope>
</reference>
<reference key="2">
    <citation type="journal article" date="2000" name="Blood">
        <title>Mild spherocytic hereditary elliptocytosis and altered levels of alpha- and gamma-adducins in beta-adducin-deficient mice.</title>
        <authorList>
            <person name="Muro A.F."/>
            <person name="Marro M.L."/>
            <person name="Gajovic S."/>
            <person name="Porro F."/>
            <person name="Luzzatto L."/>
            <person name="Baralle F.E."/>
        </authorList>
    </citation>
    <scope>NUCLEOTIDE SEQUENCE [MRNA] (ISOFORMS 1 AND 3)</scope>
    <source>
        <strain>C57BL/6J</strain>
    </source>
</reference>
<reference key="3">
    <citation type="journal article" date="2005" name="Science">
        <title>The transcriptional landscape of the mammalian genome.</title>
        <authorList>
            <person name="Carninci P."/>
            <person name="Kasukawa T."/>
            <person name="Katayama S."/>
            <person name="Gough J."/>
            <person name="Frith M.C."/>
            <person name="Maeda N."/>
            <person name="Oyama R."/>
            <person name="Ravasi T."/>
            <person name="Lenhard B."/>
            <person name="Wells C."/>
            <person name="Kodzius R."/>
            <person name="Shimokawa K."/>
            <person name="Bajic V.B."/>
            <person name="Brenner S.E."/>
            <person name="Batalov S."/>
            <person name="Forrest A.R."/>
            <person name="Zavolan M."/>
            <person name="Davis M.J."/>
            <person name="Wilming L.G."/>
            <person name="Aidinis V."/>
            <person name="Allen J.E."/>
            <person name="Ambesi-Impiombato A."/>
            <person name="Apweiler R."/>
            <person name="Aturaliya R.N."/>
            <person name="Bailey T.L."/>
            <person name="Bansal M."/>
            <person name="Baxter L."/>
            <person name="Beisel K.W."/>
            <person name="Bersano T."/>
            <person name="Bono H."/>
            <person name="Chalk A.M."/>
            <person name="Chiu K.P."/>
            <person name="Choudhary V."/>
            <person name="Christoffels A."/>
            <person name="Clutterbuck D.R."/>
            <person name="Crowe M.L."/>
            <person name="Dalla E."/>
            <person name="Dalrymple B.P."/>
            <person name="de Bono B."/>
            <person name="Della Gatta G."/>
            <person name="di Bernardo D."/>
            <person name="Down T."/>
            <person name="Engstrom P."/>
            <person name="Fagiolini M."/>
            <person name="Faulkner G."/>
            <person name="Fletcher C.F."/>
            <person name="Fukushima T."/>
            <person name="Furuno M."/>
            <person name="Futaki S."/>
            <person name="Gariboldi M."/>
            <person name="Georgii-Hemming P."/>
            <person name="Gingeras T.R."/>
            <person name="Gojobori T."/>
            <person name="Green R.E."/>
            <person name="Gustincich S."/>
            <person name="Harbers M."/>
            <person name="Hayashi Y."/>
            <person name="Hensch T.K."/>
            <person name="Hirokawa N."/>
            <person name="Hill D."/>
            <person name="Huminiecki L."/>
            <person name="Iacono M."/>
            <person name="Ikeo K."/>
            <person name="Iwama A."/>
            <person name="Ishikawa T."/>
            <person name="Jakt M."/>
            <person name="Kanapin A."/>
            <person name="Katoh M."/>
            <person name="Kawasawa Y."/>
            <person name="Kelso J."/>
            <person name="Kitamura H."/>
            <person name="Kitano H."/>
            <person name="Kollias G."/>
            <person name="Krishnan S.P."/>
            <person name="Kruger A."/>
            <person name="Kummerfeld S.K."/>
            <person name="Kurochkin I.V."/>
            <person name="Lareau L.F."/>
            <person name="Lazarevic D."/>
            <person name="Lipovich L."/>
            <person name="Liu J."/>
            <person name="Liuni S."/>
            <person name="McWilliam S."/>
            <person name="Madan Babu M."/>
            <person name="Madera M."/>
            <person name="Marchionni L."/>
            <person name="Matsuda H."/>
            <person name="Matsuzawa S."/>
            <person name="Miki H."/>
            <person name="Mignone F."/>
            <person name="Miyake S."/>
            <person name="Morris K."/>
            <person name="Mottagui-Tabar S."/>
            <person name="Mulder N."/>
            <person name="Nakano N."/>
            <person name="Nakauchi H."/>
            <person name="Ng P."/>
            <person name="Nilsson R."/>
            <person name="Nishiguchi S."/>
            <person name="Nishikawa S."/>
            <person name="Nori F."/>
            <person name="Ohara O."/>
            <person name="Okazaki Y."/>
            <person name="Orlando V."/>
            <person name="Pang K.C."/>
            <person name="Pavan W.J."/>
            <person name="Pavesi G."/>
            <person name="Pesole G."/>
            <person name="Petrovsky N."/>
            <person name="Piazza S."/>
            <person name="Reed J."/>
            <person name="Reid J.F."/>
            <person name="Ring B.Z."/>
            <person name="Ringwald M."/>
            <person name="Rost B."/>
            <person name="Ruan Y."/>
            <person name="Salzberg S.L."/>
            <person name="Sandelin A."/>
            <person name="Schneider C."/>
            <person name="Schoenbach C."/>
            <person name="Sekiguchi K."/>
            <person name="Semple C.A."/>
            <person name="Seno S."/>
            <person name="Sessa L."/>
            <person name="Sheng Y."/>
            <person name="Shibata Y."/>
            <person name="Shimada H."/>
            <person name="Shimada K."/>
            <person name="Silva D."/>
            <person name="Sinclair B."/>
            <person name="Sperling S."/>
            <person name="Stupka E."/>
            <person name="Sugiura K."/>
            <person name="Sultana R."/>
            <person name="Takenaka Y."/>
            <person name="Taki K."/>
            <person name="Tammoja K."/>
            <person name="Tan S.L."/>
            <person name="Tang S."/>
            <person name="Taylor M.S."/>
            <person name="Tegner J."/>
            <person name="Teichmann S.A."/>
            <person name="Ueda H.R."/>
            <person name="van Nimwegen E."/>
            <person name="Verardo R."/>
            <person name="Wei C.L."/>
            <person name="Yagi K."/>
            <person name="Yamanishi H."/>
            <person name="Zabarovsky E."/>
            <person name="Zhu S."/>
            <person name="Zimmer A."/>
            <person name="Hide W."/>
            <person name="Bult C."/>
            <person name="Grimmond S.M."/>
            <person name="Teasdale R.D."/>
            <person name="Liu E.T."/>
            <person name="Brusic V."/>
            <person name="Quackenbush J."/>
            <person name="Wahlestedt C."/>
            <person name="Mattick J.S."/>
            <person name="Hume D.A."/>
            <person name="Kai C."/>
            <person name="Sasaki D."/>
            <person name="Tomaru Y."/>
            <person name="Fukuda S."/>
            <person name="Kanamori-Katayama M."/>
            <person name="Suzuki M."/>
            <person name="Aoki J."/>
            <person name="Arakawa T."/>
            <person name="Iida J."/>
            <person name="Imamura K."/>
            <person name="Itoh M."/>
            <person name="Kato T."/>
            <person name="Kawaji H."/>
            <person name="Kawagashira N."/>
            <person name="Kawashima T."/>
            <person name="Kojima M."/>
            <person name="Kondo S."/>
            <person name="Konno H."/>
            <person name="Nakano K."/>
            <person name="Ninomiya N."/>
            <person name="Nishio T."/>
            <person name="Okada M."/>
            <person name="Plessy C."/>
            <person name="Shibata K."/>
            <person name="Shiraki T."/>
            <person name="Suzuki S."/>
            <person name="Tagami M."/>
            <person name="Waki K."/>
            <person name="Watahiki A."/>
            <person name="Okamura-Oho Y."/>
            <person name="Suzuki H."/>
            <person name="Kawai J."/>
            <person name="Hayashizaki Y."/>
        </authorList>
    </citation>
    <scope>NUCLEOTIDE SEQUENCE [LARGE SCALE MRNA] (ISOFORMS 1 AND 2)</scope>
    <source>
        <strain>C57BL/6J</strain>
        <strain>NOD</strain>
        <tissue>Embryonic liver</tissue>
        <tissue>Spleen</tissue>
    </source>
</reference>
<reference key="4">
    <citation type="journal article" date="2004" name="Genome Res.">
        <title>The status, quality, and expansion of the NIH full-length cDNA project: the Mammalian Gene Collection (MGC).</title>
        <authorList>
            <consortium name="The MGC Project Team"/>
        </authorList>
    </citation>
    <scope>NUCLEOTIDE SEQUENCE [LARGE SCALE MRNA] (ISOFORM 2)</scope>
    <source>
        <strain>C57BL/6J</strain>
        <tissue>Embryonic brain</tissue>
    </source>
</reference>
<reference key="5">
    <citation type="journal article" date="2004" name="Mol. Cell. Proteomics">
        <title>Phosphoproteomic analysis of the developing mouse brain.</title>
        <authorList>
            <person name="Ballif B.A."/>
            <person name="Villen J."/>
            <person name="Beausoleil S.A."/>
            <person name="Schwartz D."/>
            <person name="Gygi S.P."/>
        </authorList>
    </citation>
    <scope>PHOSPHORYLATION [LARGE SCALE ANALYSIS] AT THR-561 (ISOFORM 2)</scope>
    <scope>IDENTIFICATION BY MASS SPECTROMETRY [LARGE SCALE ANALYSIS]</scope>
    <source>
        <tissue>Embryonic brain</tissue>
    </source>
</reference>
<reference key="6">
    <citation type="journal article" date="2006" name="Mol. Cell. Proteomics">
        <title>Comprehensive identification of phosphorylation sites in postsynaptic density preparations.</title>
        <authorList>
            <person name="Trinidad J.C."/>
            <person name="Specht C.G."/>
            <person name="Thalhammer A."/>
            <person name="Schoepfer R."/>
            <person name="Burlingame A.L."/>
        </authorList>
    </citation>
    <scope>PHOSPHORYLATION [LARGE SCALE ANALYSIS] AT SER-602</scope>
    <scope>IDENTIFICATION BY MASS SPECTROMETRY [LARGE SCALE ANALYSIS]</scope>
    <source>
        <tissue>Brain</tissue>
    </source>
</reference>
<reference key="7">
    <citation type="journal article" date="2007" name="Mol. Cell. Proteomics">
        <title>Qualitative and quantitative analyses of protein phosphorylation in naive and stimulated mouse synaptosomal preparations.</title>
        <authorList>
            <person name="Munton R.P."/>
            <person name="Tweedie-Cullen R."/>
            <person name="Livingstone-Zatchej M."/>
            <person name="Weinandy F."/>
            <person name="Waidelich M."/>
            <person name="Longo D."/>
            <person name="Gehrig P."/>
            <person name="Potthast F."/>
            <person name="Rutishauser D."/>
            <person name="Gerrits B."/>
            <person name="Panse C."/>
            <person name="Schlapbach R."/>
            <person name="Mansuy I.M."/>
        </authorList>
    </citation>
    <scope>IDENTIFICATION BY MASS SPECTROMETRY [LARGE SCALE ANALYSIS]</scope>
    <source>
        <tissue>Brain cortex</tissue>
    </source>
</reference>
<reference key="8">
    <citation type="journal article" date="2007" name="Proc. Natl. Acad. Sci. U.S.A.">
        <title>Large-scale phosphorylation analysis of mouse liver.</title>
        <authorList>
            <person name="Villen J."/>
            <person name="Beausoleil S.A."/>
            <person name="Gerber S.A."/>
            <person name="Gygi S.P."/>
        </authorList>
    </citation>
    <scope>PHOSPHORYLATION [LARGE SCALE ANALYSIS] AT SER-532 AND SER-535</scope>
    <scope>IDENTIFICATION BY MASS SPECTROMETRY [LARGE SCALE ANALYSIS]</scope>
    <source>
        <tissue>Liver</tissue>
    </source>
</reference>
<reference key="9">
    <citation type="journal article" date="2010" name="Cell">
        <title>A tissue-specific atlas of mouse protein phosphorylation and expression.</title>
        <authorList>
            <person name="Huttlin E.L."/>
            <person name="Jedrychowski M.P."/>
            <person name="Elias J.E."/>
            <person name="Goswami T."/>
            <person name="Rad R."/>
            <person name="Beausoleil S.A."/>
            <person name="Villen J."/>
            <person name="Haas W."/>
            <person name="Sowa M.E."/>
            <person name="Gygi S.P."/>
        </authorList>
    </citation>
    <scope>PHOSPHORYLATION [LARGE SCALE ANALYSIS] AT SER-60; SER-344; SER-530; SER-532; THR-533; SER-535; SER-594; SER-598; SER-602; SER-606; SER-614; SER-618; SER-620; SER-688; SER-692; SER-696; SER-698 AND SER-700</scope>
    <scope>IDENTIFICATION BY MASS SPECTROMETRY [LARGE SCALE ANALYSIS]</scope>
    <source>
        <tissue>Brain</tissue>
        <tissue>Heart</tissue>
        <tissue>Kidney</tissue>
        <tissue>Lung</tissue>
        <tissue>Spleen</tissue>
    </source>
</reference>